<name>TRPF_CITBB</name>
<evidence type="ECO:0000255" key="1">
    <source>
        <dbReference type="HAMAP-Rule" id="MF_00135"/>
    </source>
</evidence>
<accession>B5EBV0</accession>
<gene>
    <name evidence="1" type="primary">trpF</name>
    <name type="ordered locus">Gbem_1960</name>
</gene>
<sequence length="206" mass="22042">MTKVKICGITTLEDALMAVEAGADALGFVFFEKSPRYIGPEAAARIIRELPPFVQVVGLFVNAELDFVNRTADTCGLDLVQLHGEESPAYCGLVRRRVMKAFRVRGAESLAALADYKVSAYLLDAYSPASHGGTGERFDWDHAVAAKGQGRIVLAGGLDPDNVAQAVAKVAPYAVDVSSGVELSPGRKDPEKVRRLIAEAKKIALI</sequence>
<organism>
    <name type="scientific">Citrifermentans bemidjiense (strain ATCC BAA-1014 / DSM 16622 / JCM 12645 / Bem)</name>
    <name type="common">Geobacter bemidjiensis</name>
    <dbReference type="NCBI Taxonomy" id="404380"/>
    <lineage>
        <taxon>Bacteria</taxon>
        <taxon>Pseudomonadati</taxon>
        <taxon>Thermodesulfobacteriota</taxon>
        <taxon>Desulfuromonadia</taxon>
        <taxon>Geobacterales</taxon>
        <taxon>Geobacteraceae</taxon>
        <taxon>Citrifermentans</taxon>
    </lineage>
</organism>
<protein>
    <recommendedName>
        <fullName evidence="1">N-(5'-phosphoribosyl)anthranilate isomerase</fullName>
        <shortName evidence="1">PRAI</shortName>
        <ecNumber evidence="1">5.3.1.24</ecNumber>
    </recommendedName>
</protein>
<proteinExistence type="inferred from homology"/>
<feature type="chain" id="PRO_1000095921" description="N-(5'-phosphoribosyl)anthranilate isomerase">
    <location>
        <begin position="1"/>
        <end position="206"/>
    </location>
</feature>
<comment type="catalytic activity">
    <reaction evidence="1">
        <text>N-(5-phospho-beta-D-ribosyl)anthranilate = 1-(2-carboxyphenylamino)-1-deoxy-D-ribulose 5-phosphate</text>
        <dbReference type="Rhea" id="RHEA:21540"/>
        <dbReference type="ChEBI" id="CHEBI:18277"/>
        <dbReference type="ChEBI" id="CHEBI:58613"/>
        <dbReference type="EC" id="5.3.1.24"/>
    </reaction>
</comment>
<comment type="pathway">
    <text evidence="1">Amino-acid biosynthesis; L-tryptophan biosynthesis; L-tryptophan from chorismate: step 3/5.</text>
</comment>
<comment type="similarity">
    <text evidence="1">Belongs to the TrpF family.</text>
</comment>
<reference key="1">
    <citation type="submission" date="2008-07" db="EMBL/GenBank/DDBJ databases">
        <title>Complete sequence of Geobacter bemidjiensis BEM.</title>
        <authorList>
            <consortium name="US DOE Joint Genome Institute"/>
            <person name="Lucas S."/>
            <person name="Copeland A."/>
            <person name="Lapidus A."/>
            <person name="Glavina del Rio T."/>
            <person name="Dalin E."/>
            <person name="Tice H."/>
            <person name="Bruce D."/>
            <person name="Goodwin L."/>
            <person name="Pitluck S."/>
            <person name="Kiss H."/>
            <person name="Brettin T."/>
            <person name="Detter J.C."/>
            <person name="Han C."/>
            <person name="Kuske C.R."/>
            <person name="Schmutz J."/>
            <person name="Larimer F."/>
            <person name="Land M."/>
            <person name="Hauser L."/>
            <person name="Kyrpides N."/>
            <person name="Lykidis A."/>
            <person name="Lovley D."/>
            <person name="Richardson P."/>
        </authorList>
    </citation>
    <scope>NUCLEOTIDE SEQUENCE [LARGE SCALE GENOMIC DNA]</scope>
    <source>
        <strain>ATCC BAA-1014 / DSM 16622 / JCM 12645 / Bem</strain>
    </source>
</reference>
<dbReference type="EC" id="5.3.1.24" evidence="1"/>
<dbReference type="EMBL" id="CP001124">
    <property type="protein sequence ID" value="ACH38974.1"/>
    <property type="molecule type" value="Genomic_DNA"/>
</dbReference>
<dbReference type="RefSeq" id="WP_012530392.1">
    <property type="nucleotide sequence ID" value="NC_011146.1"/>
</dbReference>
<dbReference type="SMR" id="B5EBV0"/>
<dbReference type="STRING" id="404380.Gbem_1960"/>
<dbReference type="KEGG" id="gbm:Gbem_1960"/>
<dbReference type="eggNOG" id="COG0135">
    <property type="taxonomic scope" value="Bacteria"/>
</dbReference>
<dbReference type="HOGENOM" id="CLU_076364_2_0_7"/>
<dbReference type="OrthoDB" id="9796196at2"/>
<dbReference type="UniPathway" id="UPA00035">
    <property type="reaction ID" value="UER00042"/>
</dbReference>
<dbReference type="Proteomes" id="UP000008825">
    <property type="component" value="Chromosome"/>
</dbReference>
<dbReference type="GO" id="GO:0004640">
    <property type="term" value="F:phosphoribosylanthranilate isomerase activity"/>
    <property type="evidence" value="ECO:0007669"/>
    <property type="project" value="UniProtKB-UniRule"/>
</dbReference>
<dbReference type="GO" id="GO:0000162">
    <property type="term" value="P:L-tryptophan biosynthetic process"/>
    <property type="evidence" value="ECO:0007669"/>
    <property type="project" value="UniProtKB-UniRule"/>
</dbReference>
<dbReference type="CDD" id="cd00405">
    <property type="entry name" value="PRAI"/>
    <property type="match status" value="1"/>
</dbReference>
<dbReference type="FunFam" id="3.20.20.70:FF:000075">
    <property type="entry name" value="Tryptophan biosynthesis protein TRP1"/>
    <property type="match status" value="1"/>
</dbReference>
<dbReference type="Gene3D" id="3.20.20.70">
    <property type="entry name" value="Aldolase class I"/>
    <property type="match status" value="1"/>
</dbReference>
<dbReference type="HAMAP" id="MF_00135">
    <property type="entry name" value="PRAI"/>
    <property type="match status" value="1"/>
</dbReference>
<dbReference type="InterPro" id="IPR013785">
    <property type="entry name" value="Aldolase_TIM"/>
</dbReference>
<dbReference type="InterPro" id="IPR001240">
    <property type="entry name" value="PRAI_dom"/>
</dbReference>
<dbReference type="InterPro" id="IPR011060">
    <property type="entry name" value="RibuloseP-bd_barrel"/>
</dbReference>
<dbReference type="InterPro" id="IPR044643">
    <property type="entry name" value="TrpF_fam"/>
</dbReference>
<dbReference type="NCBIfam" id="NF002298">
    <property type="entry name" value="PRK01222.1-4"/>
    <property type="match status" value="1"/>
</dbReference>
<dbReference type="PANTHER" id="PTHR42894">
    <property type="entry name" value="N-(5'-PHOSPHORIBOSYL)ANTHRANILATE ISOMERASE"/>
    <property type="match status" value="1"/>
</dbReference>
<dbReference type="PANTHER" id="PTHR42894:SF1">
    <property type="entry name" value="N-(5'-PHOSPHORIBOSYL)ANTHRANILATE ISOMERASE"/>
    <property type="match status" value="1"/>
</dbReference>
<dbReference type="Pfam" id="PF00697">
    <property type="entry name" value="PRAI"/>
    <property type="match status" value="1"/>
</dbReference>
<dbReference type="SUPFAM" id="SSF51366">
    <property type="entry name" value="Ribulose-phoshate binding barrel"/>
    <property type="match status" value="1"/>
</dbReference>
<keyword id="KW-0028">Amino-acid biosynthesis</keyword>
<keyword id="KW-0057">Aromatic amino acid biosynthesis</keyword>
<keyword id="KW-0413">Isomerase</keyword>
<keyword id="KW-1185">Reference proteome</keyword>
<keyword id="KW-0822">Tryptophan biosynthesis</keyword>